<keyword id="KW-0963">Cytoplasm</keyword>
<keyword id="KW-0489">Methyltransferase</keyword>
<keyword id="KW-0511">Multifunctional enzyme</keyword>
<keyword id="KW-0596">Phosphopantetheine</keyword>
<keyword id="KW-0597">Phosphoprotein</keyword>
<keyword id="KW-1185">Reference proteome</keyword>
<keyword id="KW-0808">Transferase</keyword>
<accession>W6QL47</accession>
<reference key="1">
    <citation type="journal article" date="2014" name="Nat. Commun.">
        <title>Multiple recent horizontal transfers of a large genomic region in cheese making fungi.</title>
        <authorList>
            <person name="Cheeseman K."/>
            <person name="Ropars J."/>
            <person name="Renault P."/>
            <person name="Dupont J."/>
            <person name="Gouzy J."/>
            <person name="Branca A."/>
            <person name="Abraham A.-L."/>
            <person name="Ceppi M."/>
            <person name="Conseiller E."/>
            <person name="Debuchy R."/>
            <person name="Malagnac F."/>
            <person name="Goarin A."/>
            <person name="Silar P."/>
            <person name="Lacoste S."/>
            <person name="Sallet E."/>
            <person name="Bensimon A."/>
            <person name="Giraud T."/>
            <person name="Brygoo Y."/>
        </authorList>
    </citation>
    <scope>NUCLEOTIDE SEQUENCE [LARGE SCALE GENOMIC DNA]</scope>
    <source>
        <strain>FM164</strain>
    </source>
</reference>
<reference key="2">
    <citation type="journal article" date="2016" name="PLoS ONE">
        <title>Identification and functional analysis of the mycophenolic acid gene cluster of Penicillium roqueforti.</title>
        <authorList>
            <person name="Del-Cid A."/>
            <person name="Gil-Duran C."/>
            <person name="Vaca I."/>
            <person name="Rojas-Aedo J.F."/>
            <person name="Garcia-Rico R.O."/>
            <person name="Levican G."/>
            <person name="Chavez R."/>
        </authorList>
    </citation>
    <scope>FUNCTION</scope>
    <scope>DISRUPTION PHENOTYPE</scope>
    <scope>PATHWAY</scope>
</reference>
<proteinExistence type="inferred from homology"/>
<protein>
    <recommendedName>
        <fullName evidence="10">Non-reducing polyketide synthase mapC</fullName>
        <ecNumber evidence="1">2.3.1.-</ecNumber>
    </recommendedName>
    <alternativeName>
        <fullName evidence="10">Mycophenolic acid biosynthesis cluster protein C</fullName>
    </alternativeName>
</protein>
<sequence length="2477" mass="270657">MSLNTEHSKGDLRLLFGPQCSEIEDSIAHIRDAVYKDSAGLGFLSDILDELPSLWPVITSAWPALRKVQGEKQLAALGRRFENGSPDSEAEPSSLIMTPVTVMKHLVDFWNLQNVATHPAFPSSPLSRTTAPRIIDSQGFCVGILAAIAVACSQDTREFQSLASNAIRLAVCIGALVDFDEIVSGKAKSIAVRWETPADHDYLEQTLTKSPNVYISCYTDVNSVTITIPGDTAQRVKFKQELSGRGLHTKPIPLQGRFHHQQTHREGIQHIMNLCVKDPRFQLPHSNALILPLRSSHNGQVLINAAMLHTVALESILSVKADWWGTVSALLNSADMEVDESRLLSIGQEEFVPRSARGRLVARSNLDVYGAGVFANGNTSARSAVSLQNGTNTLNGSPQAAEMPPIAITGMACRYSNADTTSELWDLLELGVCTVEKAPGNRFRMPDLQREPKGPFWGHFLDRPDAFDHRFFNISAREAESMDPQQRVLLQVAYEAMESAGYCGWQHTELSDEIGCYVGVGSEDYTENVASRNANAFSATGTLQSFIAGRISHHFGWSGPSITLDTACSSAAVAIHMACKALQTKECSIAVAGGVNILTNPRVYQNLAAASFLSSTGACKSFDVSADGYCRGEGAGLVVLRPLQDAIDNGDPILGVIAGSVVNQGSNRSPITVPDAESQRSLYRKALSLAGVAPDEVTYVEAHGTGTQVGDPIELESLRKAFGNPLRSQSLHVGSIKGNIGHTETSSGVAGLLKTILMLQKQRIPKQANFRQLNPKVMPPLENDRLVIPVESTKWASARRVAMVSNYGASGSNAALIVRDHTPSLSGQGKAMAEYIRDMPILISARSEESIRAYCGALRTTLLRHPYSNTVVRELAYNVAMKQNRTLPFTLTFSTSSDPTSLSTRLEAIAAGKSADIIQKRESNEPPIVLCFGGQNGVTSSISQELYDSCVLLQTHLMACEQAGQKLGLPSLFPTIFTSDPIVNTVYLHFMLFSIQYASARAWIDSGLRVDRIVGHSFGQLTALSVAGSLSVQEGIRLVTERARLIQSNWGPESGVMLAVEGTQAEVQRVLEQTGHRAEIACYNGPQQQVLAGTGECIRAVEDALATNPLTSNVRVRRLENSHAFHSRLVDSIVPGLTELAESFVYQAPAIPIEACSATGDWSIVTPAKIVEHSRMPVHFQRAVERIAQKLQVPAVWLEAGSASPIIPMVRRVLEKSSATHTYHRVNLDGSDGSGNLATVTSALWGQGVHVQFWPFHHSQRGTFGWMNLPPYQFAKNRHWVDFDPTAFSFSGSSAEPQCGSQERAGLLRKLSDGPEEYLFAVNTQDVLYRSCTKGHAVLDQTLCPASMYMEMVLRAATSVFTLGESSTLTMSHIEDLVISSPLVLDPQGSVFVRLIPEAVASSQTWSFSIFSSSGTGNESSIHATGSVSLCNERSRALSHFQSMNRLMDPARARGIEDHLASNGLKGSTVYSALEQVTNYADYFRGVRQVFANGREAAGLVSMAPSATETTCNPILLDNFLQVAGIHVNCLSGREAEEVFVCNAIGETYVSDSLFKKEDGAIPLSWKVYTNYVRPSKNEIVCDIYVMNSQGDGLTAAIMGVRFMSVSIRSLTRALAKLNNNFPDVPQLPPTIQPAIVTADYDEASDNVNVDSDLVAVQEMLCELFGVSVEEVSPSVSLIDIGVDSLISTEVLSEIKRRFHKDISYSTLVDIPNIQGLTEHIFPGHSHLAPSQIVIKPVRQQTVIPQTVTSLPVPANAGPSLVSVAHQCFYETHAAVSHTHNADWAGFFNAIYPQQMTLITAYILEAFRALGSPLESSQADEVLPIISVLPRHEQLKKHLYTILESVNLVRQTPTGQLVRTATPISPLSSHALHAQIRDEHPPYALEHDLLQITGSRLAECLTGQADGVSLIFQDSQTRRLVGDVYTDSPVFKSGNLYLAQYLTDVIQTLGNGRQVKILEIGAGTGGTTKNLLEQLSALPGMATRMEYTFTDISPSLVAAARKKFSKYDFVRYETINVESSPPSLLHGQYDIVLSTNCVHATRNLVESCSNIRKLLRPDGILCLVELTRDIFWLDLVFGLLEGWWRFEDGRKHALATEDLWDQTLRQSGFEWVGWTNNEAVESNALRVIVASPTKAPSALEICSKPANMETVVWGERNGLQLLADIFYPDVVDTTQKRRACALMVHGGGHVMLSRKDIRPAQTQTLLDAGFLPISVDYRLCPEVSLSEGPMADVRDALGWVRRILPNIPLLRPDIRPDGNQVVAIGWSTGGHLAMTLAFTAPAVGIAAPEAILAFYCPTDYEDPFWSRPNFPFGQTVASNDIEYDVWEGVQSAPIKGYNPAFKERPLGGWMSTSDPRSRIALHMNWTGQTLPVLLGGMHKEFRIPDELPRPTDEEIQAVSPNYQIRIGRYRTPTFMVHGTSDDLVPCAQTESTYNALTQNGIEADIRVVQGAIEVLLYLQHPERARKWICSGSLTLEI</sequence>
<feature type="chain" id="PRO_0000449215" description="Non-reducing polyketide synthase mapC">
    <location>
        <begin position="1"/>
        <end position="2477"/>
    </location>
</feature>
<feature type="domain" description="Ketosynthase family 3 (KS3)" evidence="6">
    <location>
        <begin position="403"/>
        <end position="820"/>
    </location>
</feature>
<feature type="domain" description="PKS/mFAS DH" evidence="7">
    <location>
        <begin position="1302"/>
        <end position="1612"/>
    </location>
</feature>
<feature type="domain" description="Carrier" evidence="5">
    <location>
        <begin position="1651"/>
        <end position="1725"/>
    </location>
</feature>
<feature type="region of interest" description="N-terminal acylcarrier protein transacylase domain (SAT)" evidence="4">
    <location>
        <begin position="14"/>
        <end position="269"/>
    </location>
</feature>
<feature type="region of interest" description="Malonyl-CoA:ACP transacylase (MAT) domain" evidence="4">
    <location>
        <begin position="930"/>
        <end position="1233"/>
    </location>
</feature>
<feature type="region of interest" description="N-terminal hotdog fold" evidence="7">
    <location>
        <begin position="1302"/>
        <end position="1435"/>
    </location>
</feature>
<feature type="region of interest" description="Product template (PT) domain" evidence="4">
    <location>
        <begin position="1307"/>
        <end position="1611"/>
    </location>
</feature>
<feature type="region of interest" description="C-terminal hotdog fold" evidence="7">
    <location>
        <begin position="1461"/>
        <end position="1612"/>
    </location>
</feature>
<feature type="region of interest" description="Methyltransferase (CMeT) domain" evidence="4">
    <location>
        <begin position="1882"/>
        <end position="2117"/>
    </location>
</feature>
<feature type="active site" description="For beta-ketoacyl synthase activity" evidence="6">
    <location>
        <position position="568"/>
    </location>
</feature>
<feature type="active site" description="For beta-ketoacyl synthase activity" evidence="6">
    <location>
        <position position="703"/>
    </location>
</feature>
<feature type="active site" description="For beta-ketoacyl synthase activity" evidence="6">
    <location>
        <position position="742"/>
    </location>
</feature>
<feature type="active site" description="For acyl/malonyl transferase activity" evidence="8">
    <location>
        <position position="1017"/>
    </location>
</feature>
<feature type="active site" description="Proton acceptor; for dehydratase activity" evidence="7">
    <location>
        <position position="1336"/>
    </location>
</feature>
<feature type="active site" description="Proton donor; for dehydratase activity" evidence="7">
    <location>
        <position position="1518"/>
    </location>
</feature>
<feature type="active site" description="For thioesterase activity" evidence="2">
    <location>
        <position position="2267"/>
    </location>
</feature>
<feature type="active site" description="For thioesterase activity" evidence="2">
    <location>
        <position position="2421"/>
    </location>
</feature>
<feature type="modified residue" description="O-(pantetheine 4'-phosphoryl)serine" evidence="5">
    <location>
        <position position="1685"/>
    </location>
</feature>
<gene>
    <name evidence="10" type="primary">mpaC</name>
    <name type="ORF">PROQFM164_S05g000559</name>
</gene>
<name>MPAC_PENRF</name>
<comment type="function">
    <text evidence="1 9 11">Non-reducing polyketide synthase; part of the gene cluster that mediates the biosynthesis of mycophenolic acid (MPA), the first isolated antibiotic natural product in the world obtained from a culture of Penicillium brevicompactum in 1893 (PubMed:26751579). MpaC catalyzes the synthesis of 5-methylorsellinic acid (5MOA) via the condensation of 1 acetyl-CoA starter unit with 3 malonyl-CoA units and one methylation step (By similarity). The first step of the pathway is the synthesis of 5-methylorsellinic acid (5MOA) by the cytosolic polyketide synthase mpaC. 5MOA is then converted to the phthalide compound 5,7-dihydroxy-4,6-dimethylphthalide (DHMP) by the endoplasmic reticulum-bound cytochrome P450 monooxygenase mpaDE. MpaDE first catalyzes hydroxylation of 5-MOA to 4,6-dihydroxy-2-(hydroxymethyl)-3-methylbenzoic acid (DHMB). MpaDE then acts as a lactone synthase that catalyzes the ring closure to convert DHMB into DHMP. The next step is the prenylation of DHMP by the Golgi apparatus-associated prenyltransferase mpaA to yield farnesyl-DHMP (FDHMP). The ER-bound oxygenase mpaB then mediates the oxidative cleavage the C19-C20 double bond in FDHMP to yield FDHMP-3C via a mycophenolic aldehyde intermediate. The O-methyltransferase mpaG catalyzes the methylation of FDHMP-3C to yield MFDHMP-3C. After the cytosolic methylation of FDHMP-3C, MFDHMP-3C enters into peroxisomes probably via free diffusion due to its low molecular weight. Upon a peroxisomal CoA ligation reaction, catalyzed by a beta-oxidation component enzyme acyl-CoA ligase ACL891, MFDHMP-3C-CoA would then be restricted to peroxisomes for the following beta-oxidation pathway steps. The peroxisomal beta-oxidation machinery than converts MFDHMP-3C-CoA into MPA_CoA, via a beta-oxidation chain-shortening process. Finally mpaH acts as a peroxisomal acyl-CoA hydrolase with high substrate specificity toward MPA-CoA to release the final product MPA (Probable) (PubMed:26751579).</text>
</comment>
<comment type="catalytic activity">
    <reaction evidence="1">
        <text>3 malonyl-CoA + acetyl-CoA + S-adenosyl-L-methionine + H(+) = 5-methylorsellinate + S-adenosyl-L-homocysteine + 3 CO2 + 4 CoA</text>
        <dbReference type="Rhea" id="RHEA:63056"/>
        <dbReference type="ChEBI" id="CHEBI:15378"/>
        <dbReference type="ChEBI" id="CHEBI:16526"/>
        <dbReference type="ChEBI" id="CHEBI:57287"/>
        <dbReference type="ChEBI" id="CHEBI:57288"/>
        <dbReference type="ChEBI" id="CHEBI:57384"/>
        <dbReference type="ChEBI" id="CHEBI:57856"/>
        <dbReference type="ChEBI" id="CHEBI:59789"/>
        <dbReference type="ChEBI" id="CHEBI:146172"/>
    </reaction>
    <physiologicalReaction direction="left-to-right" evidence="1">
        <dbReference type="Rhea" id="RHEA:63057"/>
    </physiologicalReaction>
</comment>
<comment type="pathway">
    <text evidence="9">Secondary metabolite biosynthesis; terpenoid biosynthesis.</text>
</comment>
<comment type="subcellular location">
    <subcellularLocation>
        <location evidence="1">Cytoplasm</location>
        <location evidence="1">Cytosol</location>
    </subcellularLocation>
</comment>
<comment type="domain">
    <text evidence="3">Multidomain protein; including a starter unit:ACP transacylase (SAT) that selects the starter unit; a ketosynthase (KS) that catalyzes repeated decarboxylative condensation to elongate the polyketide backbone; a malonyl-CoA:ACP transacylase (MAT) that selects and transfers the extender unit malonyl-CoA; a product template (PT) domain that controls the immediate cyclization regioselectivity of the reactive polyketide backbone; and an acyl-carrier protein (ACP) that serves as the tether of the growing and completed polyketide via its phosphopantetheinyl arm.</text>
</comment>
<comment type="disruption phenotype">
    <text evidence="9">Results in dramatic reduction in MPA production.</text>
</comment>
<evidence type="ECO:0000250" key="1">
    <source>
        <dbReference type="UniProtKB" id="A0A0B5KU17"/>
    </source>
</evidence>
<evidence type="ECO:0000250" key="2">
    <source>
        <dbReference type="UniProtKB" id="Q5ATJ7"/>
    </source>
</evidence>
<evidence type="ECO:0000250" key="3">
    <source>
        <dbReference type="UniProtKB" id="Q5B0D0"/>
    </source>
</evidence>
<evidence type="ECO:0000255" key="4"/>
<evidence type="ECO:0000255" key="5">
    <source>
        <dbReference type="PROSITE-ProRule" id="PRU00258"/>
    </source>
</evidence>
<evidence type="ECO:0000255" key="6">
    <source>
        <dbReference type="PROSITE-ProRule" id="PRU01348"/>
    </source>
</evidence>
<evidence type="ECO:0000255" key="7">
    <source>
        <dbReference type="PROSITE-ProRule" id="PRU01363"/>
    </source>
</evidence>
<evidence type="ECO:0000255" key="8">
    <source>
        <dbReference type="PROSITE-ProRule" id="PRU10022"/>
    </source>
</evidence>
<evidence type="ECO:0000269" key="9">
    <source>
    </source>
</evidence>
<evidence type="ECO:0000303" key="10">
    <source>
    </source>
</evidence>
<evidence type="ECO:0000305" key="11">
    <source>
    </source>
</evidence>
<dbReference type="EC" id="2.3.1.-" evidence="1"/>
<dbReference type="EMBL" id="HG792019">
    <property type="protein sequence ID" value="CDM36726.1"/>
    <property type="molecule type" value="Genomic_DNA"/>
</dbReference>
<dbReference type="SMR" id="W6QL47"/>
<dbReference type="STRING" id="1365484.W6QL47"/>
<dbReference type="ESTHER" id="penrf-mpac">
    <property type="family name" value="BD-FAE"/>
</dbReference>
<dbReference type="OMA" id="KWASARR"/>
<dbReference type="OrthoDB" id="429813at2759"/>
<dbReference type="UniPathway" id="UPA00213"/>
<dbReference type="Proteomes" id="UP000030686">
    <property type="component" value="Unassembled WGS sequence"/>
</dbReference>
<dbReference type="GO" id="GO:0005829">
    <property type="term" value="C:cytosol"/>
    <property type="evidence" value="ECO:0000250"/>
    <property type="project" value="GO_Central"/>
</dbReference>
<dbReference type="GO" id="GO:0004315">
    <property type="term" value="F:3-oxoacyl-[acyl-carrier-protein] synthase activity"/>
    <property type="evidence" value="ECO:0007669"/>
    <property type="project" value="InterPro"/>
</dbReference>
<dbReference type="GO" id="GO:0004312">
    <property type="term" value="F:fatty acid synthase activity"/>
    <property type="evidence" value="ECO:0007669"/>
    <property type="project" value="TreeGrafter"/>
</dbReference>
<dbReference type="GO" id="GO:0008168">
    <property type="term" value="F:methyltransferase activity"/>
    <property type="evidence" value="ECO:0007669"/>
    <property type="project" value="UniProtKB-KW"/>
</dbReference>
<dbReference type="GO" id="GO:0031177">
    <property type="term" value="F:phosphopantetheine binding"/>
    <property type="evidence" value="ECO:0007669"/>
    <property type="project" value="InterPro"/>
</dbReference>
<dbReference type="GO" id="GO:0006633">
    <property type="term" value="P:fatty acid biosynthetic process"/>
    <property type="evidence" value="ECO:0007669"/>
    <property type="project" value="InterPro"/>
</dbReference>
<dbReference type="GO" id="GO:0032259">
    <property type="term" value="P:methylation"/>
    <property type="evidence" value="ECO:0007669"/>
    <property type="project" value="UniProtKB-KW"/>
</dbReference>
<dbReference type="GO" id="GO:0140722">
    <property type="term" value="P:mycophenolic acid biosynthetic process"/>
    <property type="evidence" value="ECO:0000315"/>
    <property type="project" value="GO_Central"/>
</dbReference>
<dbReference type="GO" id="GO:0016114">
    <property type="term" value="P:terpenoid biosynthetic process"/>
    <property type="evidence" value="ECO:0007669"/>
    <property type="project" value="UniProtKB-UniPathway"/>
</dbReference>
<dbReference type="CDD" id="cd02440">
    <property type="entry name" value="AdoMet_MTases"/>
    <property type="match status" value="1"/>
</dbReference>
<dbReference type="CDD" id="cd00833">
    <property type="entry name" value="PKS"/>
    <property type="match status" value="1"/>
</dbReference>
<dbReference type="Gene3D" id="3.30.70.3290">
    <property type="match status" value="1"/>
</dbReference>
<dbReference type="Gene3D" id="3.40.47.10">
    <property type="match status" value="1"/>
</dbReference>
<dbReference type="Gene3D" id="1.10.1200.10">
    <property type="entry name" value="ACP-like"/>
    <property type="match status" value="1"/>
</dbReference>
<dbReference type="Gene3D" id="3.40.50.1820">
    <property type="entry name" value="alpha/beta hydrolase"/>
    <property type="match status" value="1"/>
</dbReference>
<dbReference type="Gene3D" id="3.40.366.10">
    <property type="entry name" value="Malonyl-Coenzyme A Acyl Carrier Protein, domain 2"/>
    <property type="match status" value="2"/>
</dbReference>
<dbReference type="Gene3D" id="3.10.129.110">
    <property type="entry name" value="Polyketide synthase dehydratase"/>
    <property type="match status" value="1"/>
</dbReference>
<dbReference type="Gene3D" id="3.40.50.150">
    <property type="entry name" value="Vaccinia Virus protein VP39"/>
    <property type="match status" value="1"/>
</dbReference>
<dbReference type="InterPro" id="IPR029058">
    <property type="entry name" value="AB_hydrolase_fold"/>
</dbReference>
<dbReference type="InterPro" id="IPR001227">
    <property type="entry name" value="Ac_transferase_dom_sf"/>
</dbReference>
<dbReference type="InterPro" id="IPR036736">
    <property type="entry name" value="ACP-like_sf"/>
</dbReference>
<dbReference type="InterPro" id="IPR014043">
    <property type="entry name" value="Acyl_transferase_dom"/>
</dbReference>
<dbReference type="InterPro" id="IPR016035">
    <property type="entry name" value="Acyl_Trfase/lysoPLipase"/>
</dbReference>
<dbReference type="InterPro" id="IPR049492">
    <property type="entry name" value="BD-FAE-like_dom"/>
</dbReference>
<dbReference type="InterPro" id="IPR018201">
    <property type="entry name" value="Ketoacyl_synth_AS"/>
</dbReference>
<dbReference type="InterPro" id="IPR014031">
    <property type="entry name" value="Ketoacyl_synth_C"/>
</dbReference>
<dbReference type="InterPro" id="IPR014030">
    <property type="entry name" value="Ketoacyl_synth_N"/>
</dbReference>
<dbReference type="InterPro" id="IPR016036">
    <property type="entry name" value="Malonyl_transacylase_ACP-bd"/>
</dbReference>
<dbReference type="InterPro" id="IPR013217">
    <property type="entry name" value="Methyltransf_12"/>
</dbReference>
<dbReference type="InterPro" id="IPR020841">
    <property type="entry name" value="PKS_Beta-ketoAc_synthase_dom"/>
</dbReference>
<dbReference type="InterPro" id="IPR042104">
    <property type="entry name" value="PKS_dehydratase_sf"/>
</dbReference>
<dbReference type="InterPro" id="IPR020807">
    <property type="entry name" value="PKS_DH"/>
</dbReference>
<dbReference type="InterPro" id="IPR049551">
    <property type="entry name" value="PKS_DH_C"/>
</dbReference>
<dbReference type="InterPro" id="IPR049552">
    <property type="entry name" value="PKS_DH_N"/>
</dbReference>
<dbReference type="InterPro" id="IPR049900">
    <property type="entry name" value="PKS_mFAS_DH"/>
</dbReference>
<dbReference type="InterPro" id="IPR050091">
    <property type="entry name" value="PKS_NRPS_Biosynth_Enz"/>
</dbReference>
<dbReference type="InterPro" id="IPR020806">
    <property type="entry name" value="PKS_PP-bd"/>
</dbReference>
<dbReference type="InterPro" id="IPR009081">
    <property type="entry name" value="PP-bd_ACP"/>
</dbReference>
<dbReference type="InterPro" id="IPR006162">
    <property type="entry name" value="Ppantetheine_attach_site"/>
</dbReference>
<dbReference type="InterPro" id="IPR029063">
    <property type="entry name" value="SAM-dependent_MTases_sf"/>
</dbReference>
<dbReference type="InterPro" id="IPR032088">
    <property type="entry name" value="SAT"/>
</dbReference>
<dbReference type="InterPro" id="IPR016039">
    <property type="entry name" value="Thiolase-like"/>
</dbReference>
<dbReference type="PANTHER" id="PTHR43775">
    <property type="entry name" value="FATTY ACID SYNTHASE"/>
    <property type="match status" value="1"/>
</dbReference>
<dbReference type="PANTHER" id="PTHR43775:SF21">
    <property type="entry name" value="NON-REDUCING POLYKETIDE SYNTHASE AUSA-RELATED"/>
    <property type="match status" value="1"/>
</dbReference>
<dbReference type="Pfam" id="PF00698">
    <property type="entry name" value="Acyl_transf_1"/>
    <property type="match status" value="1"/>
</dbReference>
<dbReference type="Pfam" id="PF20434">
    <property type="entry name" value="BD-FAE"/>
    <property type="match status" value="1"/>
</dbReference>
<dbReference type="Pfam" id="PF18558">
    <property type="entry name" value="HTH_51"/>
    <property type="match status" value="1"/>
</dbReference>
<dbReference type="Pfam" id="PF00109">
    <property type="entry name" value="ketoacyl-synt"/>
    <property type="match status" value="1"/>
</dbReference>
<dbReference type="Pfam" id="PF02801">
    <property type="entry name" value="Ketoacyl-synt_C"/>
    <property type="match status" value="1"/>
</dbReference>
<dbReference type="Pfam" id="PF08242">
    <property type="entry name" value="Methyltransf_12"/>
    <property type="match status" value="1"/>
</dbReference>
<dbReference type="Pfam" id="PF21089">
    <property type="entry name" value="PKS_DH_N"/>
    <property type="match status" value="1"/>
</dbReference>
<dbReference type="Pfam" id="PF00550">
    <property type="entry name" value="PP-binding"/>
    <property type="match status" value="1"/>
</dbReference>
<dbReference type="Pfam" id="PF14765">
    <property type="entry name" value="PS-DH"/>
    <property type="match status" value="1"/>
</dbReference>
<dbReference type="Pfam" id="PF16073">
    <property type="entry name" value="SAT"/>
    <property type="match status" value="1"/>
</dbReference>
<dbReference type="SMART" id="SM00827">
    <property type="entry name" value="PKS_AT"/>
    <property type="match status" value="1"/>
</dbReference>
<dbReference type="SMART" id="SM00826">
    <property type="entry name" value="PKS_DH"/>
    <property type="match status" value="1"/>
</dbReference>
<dbReference type="SMART" id="SM00825">
    <property type="entry name" value="PKS_KS"/>
    <property type="match status" value="1"/>
</dbReference>
<dbReference type="SMART" id="SM00823">
    <property type="entry name" value="PKS_PP"/>
    <property type="match status" value="1"/>
</dbReference>
<dbReference type="SMART" id="SM01294">
    <property type="entry name" value="PKS_PP_betabranch"/>
    <property type="match status" value="1"/>
</dbReference>
<dbReference type="SUPFAM" id="SSF47336">
    <property type="entry name" value="ACP-like"/>
    <property type="match status" value="1"/>
</dbReference>
<dbReference type="SUPFAM" id="SSF53474">
    <property type="entry name" value="alpha/beta-Hydrolases"/>
    <property type="match status" value="1"/>
</dbReference>
<dbReference type="SUPFAM" id="SSF52151">
    <property type="entry name" value="FabD/lysophospholipase-like"/>
    <property type="match status" value="1"/>
</dbReference>
<dbReference type="SUPFAM" id="SSF55048">
    <property type="entry name" value="Probable ACP-binding domain of malonyl-CoA ACP transacylase"/>
    <property type="match status" value="1"/>
</dbReference>
<dbReference type="SUPFAM" id="SSF53335">
    <property type="entry name" value="S-adenosyl-L-methionine-dependent methyltransferases"/>
    <property type="match status" value="1"/>
</dbReference>
<dbReference type="SUPFAM" id="SSF53901">
    <property type="entry name" value="Thiolase-like"/>
    <property type="match status" value="1"/>
</dbReference>
<dbReference type="PROSITE" id="PS50075">
    <property type="entry name" value="CARRIER"/>
    <property type="match status" value="1"/>
</dbReference>
<dbReference type="PROSITE" id="PS00606">
    <property type="entry name" value="KS3_1"/>
    <property type="match status" value="1"/>
</dbReference>
<dbReference type="PROSITE" id="PS52004">
    <property type="entry name" value="KS3_2"/>
    <property type="match status" value="1"/>
</dbReference>
<dbReference type="PROSITE" id="PS00012">
    <property type="entry name" value="PHOSPHOPANTETHEINE"/>
    <property type="match status" value="1"/>
</dbReference>
<dbReference type="PROSITE" id="PS52019">
    <property type="entry name" value="PKS_MFAS_DH"/>
    <property type="match status" value="1"/>
</dbReference>
<organism>
    <name type="scientific">Penicillium roqueforti (strain FM164)</name>
    <dbReference type="NCBI Taxonomy" id="1365484"/>
    <lineage>
        <taxon>Eukaryota</taxon>
        <taxon>Fungi</taxon>
        <taxon>Dikarya</taxon>
        <taxon>Ascomycota</taxon>
        <taxon>Pezizomycotina</taxon>
        <taxon>Eurotiomycetes</taxon>
        <taxon>Eurotiomycetidae</taxon>
        <taxon>Eurotiales</taxon>
        <taxon>Aspergillaceae</taxon>
        <taxon>Penicillium</taxon>
    </lineage>
</organism>